<gene>
    <name evidence="1" type="primary">rexB</name>
    <name type="ordered locus">SZO_11330</name>
</gene>
<protein>
    <recommendedName>
        <fullName evidence="1">ATP-dependent helicase/deoxyribonuclease subunit B</fullName>
        <ecNumber evidence="1">3.1.-.-</ecNumber>
    </recommendedName>
    <alternativeName>
        <fullName evidence="1">ATP-dependent helicase/nuclease subunit RexB</fullName>
    </alternativeName>
</protein>
<proteinExistence type="inferred from homology"/>
<reference key="1">
    <citation type="journal article" date="2009" name="PLoS Pathog.">
        <title>Genomic evidence for the evolution of Streptococcus equi: host restriction, increased virulence, and genetic exchange with human pathogens.</title>
        <authorList>
            <person name="Holden M.T.G."/>
            <person name="Heather Z."/>
            <person name="Paillot R."/>
            <person name="Steward K.F."/>
            <person name="Webb K."/>
            <person name="Ainslie F."/>
            <person name="Jourdan T."/>
            <person name="Bason N.C."/>
            <person name="Holroyd N.E."/>
            <person name="Mungall K."/>
            <person name="Quail M.A."/>
            <person name="Sanders M."/>
            <person name="Simmonds M."/>
            <person name="Willey D."/>
            <person name="Brooks K."/>
            <person name="Aanensen D.M."/>
            <person name="Spratt B.G."/>
            <person name="Jolley K.A."/>
            <person name="Maiden M.C.J."/>
            <person name="Kehoe M."/>
            <person name="Chanter N."/>
            <person name="Bentley S.D."/>
            <person name="Robinson C."/>
            <person name="Maskell D.J."/>
            <person name="Parkhill J."/>
            <person name="Waller A.S."/>
        </authorList>
    </citation>
    <scope>NUCLEOTIDE SEQUENCE [LARGE SCALE GENOMIC DNA]</scope>
    <source>
        <strain>H70</strain>
    </source>
</reference>
<dbReference type="EC" id="3.1.-.-" evidence="1"/>
<dbReference type="EMBL" id="FM204884">
    <property type="protein sequence ID" value="CAW99552.1"/>
    <property type="molecule type" value="Genomic_DNA"/>
</dbReference>
<dbReference type="SMR" id="C0MGY7"/>
<dbReference type="KEGG" id="seq:SZO_11330"/>
<dbReference type="eggNOG" id="COG3857">
    <property type="taxonomic scope" value="Bacteria"/>
</dbReference>
<dbReference type="HOGENOM" id="CLU_007838_1_0_9"/>
<dbReference type="Proteomes" id="UP000001368">
    <property type="component" value="Chromosome"/>
</dbReference>
<dbReference type="GO" id="GO:0008409">
    <property type="term" value="F:5'-3' exonuclease activity"/>
    <property type="evidence" value="ECO:0007669"/>
    <property type="project" value="UniProtKB-UniRule"/>
</dbReference>
<dbReference type="GO" id="GO:0005524">
    <property type="term" value="F:ATP binding"/>
    <property type="evidence" value="ECO:0007669"/>
    <property type="project" value="UniProtKB-UniRule"/>
</dbReference>
<dbReference type="GO" id="GO:0003690">
    <property type="term" value="F:double-stranded DNA binding"/>
    <property type="evidence" value="ECO:0007669"/>
    <property type="project" value="UniProtKB-UniRule"/>
</dbReference>
<dbReference type="GO" id="GO:0004386">
    <property type="term" value="F:helicase activity"/>
    <property type="evidence" value="ECO:0007669"/>
    <property type="project" value="UniProtKB-KW"/>
</dbReference>
<dbReference type="GO" id="GO:0016817">
    <property type="term" value="F:hydrolase activity, acting on acid anhydrides"/>
    <property type="evidence" value="ECO:0007669"/>
    <property type="project" value="InterPro"/>
</dbReference>
<dbReference type="GO" id="GO:0000724">
    <property type="term" value="P:double-strand break repair via homologous recombination"/>
    <property type="evidence" value="ECO:0007669"/>
    <property type="project" value="UniProtKB-UniRule"/>
</dbReference>
<dbReference type="Gene3D" id="3.90.320.10">
    <property type="match status" value="1"/>
</dbReference>
<dbReference type="Gene3D" id="3.40.50.300">
    <property type="entry name" value="P-loop containing nucleotide triphosphate hydrolases"/>
    <property type="match status" value="4"/>
</dbReference>
<dbReference type="HAMAP" id="MF_01453">
    <property type="entry name" value="AddB_type2"/>
    <property type="match status" value="1"/>
</dbReference>
<dbReference type="InterPro" id="IPR049035">
    <property type="entry name" value="ADDB_N"/>
</dbReference>
<dbReference type="InterPro" id="IPR014141">
    <property type="entry name" value="DNA_helicase_suRexB"/>
</dbReference>
<dbReference type="InterPro" id="IPR027417">
    <property type="entry name" value="P-loop_NTPase"/>
</dbReference>
<dbReference type="InterPro" id="IPR011604">
    <property type="entry name" value="PDDEXK-like_dom_sf"/>
</dbReference>
<dbReference type="InterPro" id="IPR038726">
    <property type="entry name" value="PDDEXK_AddAB-type"/>
</dbReference>
<dbReference type="InterPro" id="IPR011335">
    <property type="entry name" value="Restrct_endonuc-II-like"/>
</dbReference>
<dbReference type="NCBIfam" id="TIGR02774">
    <property type="entry name" value="rexB_recomb"/>
    <property type="match status" value="1"/>
</dbReference>
<dbReference type="PANTHER" id="PTHR30591">
    <property type="entry name" value="RECBCD ENZYME SUBUNIT RECC"/>
    <property type="match status" value="1"/>
</dbReference>
<dbReference type="PANTHER" id="PTHR30591:SF1">
    <property type="entry name" value="RECBCD ENZYME SUBUNIT RECC"/>
    <property type="match status" value="1"/>
</dbReference>
<dbReference type="Pfam" id="PF21445">
    <property type="entry name" value="ADDB_N"/>
    <property type="match status" value="1"/>
</dbReference>
<dbReference type="Pfam" id="PF12705">
    <property type="entry name" value="PDDEXK_1"/>
    <property type="match status" value="1"/>
</dbReference>
<dbReference type="SUPFAM" id="SSF52540">
    <property type="entry name" value="P-loop containing nucleoside triphosphate hydrolases"/>
    <property type="match status" value="1"/>
</dbReference>
<dbReference type="SUPFAM" id="SSF52980">
    <property type="entry name" value="Restriction endonuclease-like"/>
    <property type="match status" value="1"/>
</dbReference>
<feature type="chain" id="PRO_0000379390" description="ATP-dependent helicase/deoxyribonuclease subunit B">
    <location>
        <begin position="1"/>
        <end position="1073"/>
    </location>
</feature>
<comment type="function">
    <text evidence="1">The heterodimer acts as both an ATP-dependent DNA helicase and an ATP-dependent, dual-direction single-stranded exonuclease. Recognizes the chi site generating a DNA molecule suitable for the initiation of homologous recombination. This subunit has 5' -&gt; 3' nuclease activity but not helicase activity.</text>
</comment>
<comment type="cofactor">
    <cofactor evidence="1">
        <name>Mg(2+)</name>
        <dbReference type="ChEBI" id="CHEBI:18420"/>
    </cofactor>
</comment>
<comment type="subunit">
    <text evidence="1">Heterodimer of AddA and RexB.</text>
</comment>
<comment type="miscellaneous">
    <text evidence="1">Despite having helicase-like domains, this subunit does not have helicase activity.</text>
</comment>
<comment type="similarity">
    <text evidence="1">Belongs to the helicase family. AddB/RexB type 2 subfamily.</text>
</comment>
<organism>
    <name type="scientific">Streptococcus equi subsp. zooepidemicus (strain H70)</name>
    <dbReference type="NCBI Taxonomy" id="553483"/>
    <lineage>
        <taxon>Bacteria</taxon>
        <taxon>Bacillati</taxon>
        <taxon>Bacillota</taxon>
        <taxon>Bacilli</taxon>
        <taxon>Lactobacillales</taxon>
        <taxon>Streptococcaceae</taxon>
        <taxon>Streptococcus</taxon>
    </lineage>
</organism>
<accession>C0MGY7</accession>
<name>ADDB_STRS7</name>
<keyword id="KW-0067">ATP-binding</keyword>
<keyword id="KW-0227">DNA damage</keyword>
<keyword id="KW-0234">DNA repair</keyword>
<keyword id="KW-0238">DNA-binding</keyword>
<keyword id="KW-0269">Exonuclease</keyword>
<keyword id="KW-0347">Helicase</keyword>
<keyword id="KW-0378">Hydrolase</keyword>
<keyword id="KW-0540">Nuclease</keyword>
<keyword id="KW-0547">Nucleotide-binding</keyword>
<evidence type="ECO:0000255" key="1">
    <source>
        <dbReference type="HAMAP-Rule" id="MF_01453"/>
    </source>
</evidence>
<sequence length="1073" mass="122255">MKLLYTEISYSMTEILVKEARAYADKGYRVFYIAPNSLSFEKERSVLALLPEQGSFAITVTRFEQMARYFTLAKAANRQALDDNGLAMIFYRVLMQLQEDELKVFHRLRTDQAFIAQLVELYKELQAANLTAFDLTTLDRPEKQEDLITIMTKAEQLIAQGDYDQSSRLAQLAEAIKSKSLDDELRQTVLVIDGFTRFSAEEEQLLALLNEACEEIVIGAYISQKAYRLAFTKGNLYEASLAFIQQLAQQFQTKPIYTTSEKVFDVSFSRLTQLLEANHDYSKLDWQLSAKDKSKVVIWQALNQKEELEYVAKAIREKLYQGYRYKDMLVLLGDVASYQLQIGPIFEKFEIPYYIGKQEPMSAHPLVQFVESLERGRRYNWRREDIVNLLKSGLFGRFQEGELDQLEQYLVFADIQGFTKFSRPFTLNSSRQYPLPLLNQLRLAVVTPLQQLFKSQKQLGASLLDKLMTFFKTIQLADNFEALAGSRREADREKDEEVWKAFTGILETFYQVFGQEKMTLADCLALIKMGMQTAHYRTVPATLDVVSIKSYDLVEPHSKPFVFAIGLSRSHFPKQTKNTSLISDQERASINEQTASYQRLDVPSFENIKKNHQTALSLFNAATQELVLSLPTSLTNSSDDVSPYLKELIALGVPVIEKGKNRLSHSAADIGNYKALLSRLVAINRQGIADDMTSEDRNFWTVALRYLKRRLADEQLSLPAFEHHLTTKPVAPEVIETRFPSHQPLSLSSSALTVFYNNQYKYFLKYVLGLQEPESIHPDARIHGQYLHRIFELVTKDRTDAAFDQKLGAAIAAVNQQSAFQQVYQADAEGRYSLEVLKGIAYSTAPVLNLNQGMQVAKQEEAFELALGHQALIRGVIDRIDQLADGRLGIVDYKSSARVFDIGAFYNGLSPQLVTYLAALKNKGQGLFGAMYLHMQEPRLSLSDFKVLDDQLVAAAYKELTYKGIFLAQAKEYLANGSYHLNNTLYETDELETLLAYNEQLYLSAVKQIKTGHFLINPYTADGKSVQGDQLKAITRFEADLDLGYARRLVVLPVKERRQAFLTRMNEEIKHED</sequence>